<organism>
    <name type="scientific">Coccidioides immitis (strain RS)</name>
    <name type="common">Valley fever fungus</name>
    <dbReference type="NCBI Taxonomy" id="246410"/>
    <lineage>
        <taxon>Eukaryota</taxon>
        <taxon>Fungi</taxon>
        <taxon>Dikarya</taxon>
        <taxon>Ascomycota</taxon>
        <taxon>Pezizomycotina</taxon>
        <taxon>Eurotiomycetes</taxon>
        <taxon>Eurotiomycetidae</taxon>
        <taxon>Onygenales</taxon>
        <taxon>Onygenaceae</taxon>
        <taxon>Coccidioides</taxon>
    </lineage>
</organism>
<dbReference type="EC" id="2.3.1.1"/>
<dbReference type="EMBL" id="GG704913">
    <property type="protein sequence ID" value="EAS29426.3"/>
    <property type="molecule type" value="Genomic_DNA"/>
</dbReference>
<dbReference type="RefSeq" id="XP_001241009.1">
    <property type="nucleotide sequence ID" value="XM_001241008.2"/>
</dbReference>
<dbReference type="SMR" id="Q1DNE1"/>
<dbReference type="STRING" id="246410.Q1DNE1"/>
<dbReference type="GeneID" id="4560512"/>
<dbReference type="KEGG" id="cim:CIMG_08172"/>
<dbReference type="VEuPathDB" id="FungiDB:CIMG_08172"/>
<dbReference type="InParanoid" id="Q1DNE1"/>
<dbReference type="OMA" id="NAMVRDC"/>
<dbReference type="OrthoDB" id="5585968at2759"/>
<dbReference type="UniPathway" id="UPA00068">
    <property type="reaction ID" value="UER00106"/>
</dbReference>
<dbReference type="Proteomes" id="UP000001261">
    <property type="component" value="Unassembled WGS sequence"/>
</dbReference>
<dbReference type="GO" id="GO:0005759">
    <property type="term" value="C:mitochondrial matrix"/>
    <property type="evidence" value="ECO:0007669"/>
    <property type="project" value="TreeGrafter"/>
</dbReference>
<dbReference type="GO" id="GO:0004042">
    <property type="term" value="F:L-glutamate N-acetyltransferase activity"/>
    <property type="evidence" value="ECO:0007669"/>
    <property type="project" value="InterPro"/>
</dbReference>
<dbReference type="GO" id="GO:0006526">
    <property type="term" value="P:L-arginine biosynthetic process"/>
    <property type="evidence" value="ECO:0007669"/>
    <property type="project" value="UniProtKB-UniPathway"/>
</dbReference>
<dbReference type="GO" id="GO:0006592">
    <property type="term" value="P:ornithine biosynthetic process"/>
    <property type="evidence" value="ECO:0007669"/>
    <property type="project" value="TreeGrafter"/>
</dbReference>
<dbReference type="FunFam" id="3.40.630.30:FF:000049">
    <property type="entry name" value="Amino-acid acetyltransferase, mitochondrial"/>
    <property type="match status" value="1"/>
</dbReference>
<dbReference type="Gene3D" id="3.40.630.30">
    <property type="match status" value="1"/>
</dbReference>
<dbReference type="Gene3D" id="3.40.1160.10">
    <property type="entry name" value="Acetylglutamate kinase-like"/>
    <property type="match status" value="1"/>
</dbReference>
<dbReference type="InterPro" id="IPR036393">
    <property type="entry name" value="AceGlu_kinase-like_sf"/>
</dbReference>
<dbReference type="InterPro" id="IPR011190">
    <property type="entry name" value="GlcNAc_Synth_fun"/>
</dbReference>
<dbReference type="InterPro" id="IPR006855">
    <property type="entry name" value="Vertebrate-like_GNAT_dom"/>
</dbReference>
<dbReference type="PANTHER" id="PTHR23342:SF4">
    <property type="entry name" value="AMINO-ACID ACETYLTRANSFERASE, MITOCHONDRIAL"/>
    <property type="match status" value="1"/>
</dbReference>
<dbReference type="PANTHER" id="PTHR23342">
    <property type="entry name" value="N-ACETYLGLUTAMATE SYNTHASE"/>
    <property type="match status" value="1"/>
</dbReference>
<dbReference type="Pfam" id="PF04768">
    <property type="entry name" value="NAT"/>
    <property type="match status" value="1"/>
</dbReference>
<dbReference type="PIRSF" id="PIRSF007892">
    <property type="entry name" value="NAGS_fungal"/>
    <property type="match status" value="1"/>
</dbReference>
<dbReference type="PROSITE" id="PS51731">
    <property type="entry name" value="GNAT_NAGS"/>
    <property type="match status" value="1"/>
</dbReference>
<keyword id="KW-0012">Acyltransferase</keyword>
<keyword id="KW-0028">Amino-acid biosynthesis</keyword>
<keyword id="KW-0496">Mitochondrion</keyword>
<keyword id="KW-1185">Reference proteome</keyword>
<keyword id="KW-0808">Transferase</keyword>
<keyword id="KW-0809">Transit peptide</keyword>
<gene>
    <name type="primary">ARG2</name>
    <name type="ORF">CIMG_08172</name>
</gene>
<accession>Q1DNE1</accession>
<accession>J3K5P6</accession>
<name>NAGS_COCIM</name>
<sequence length="737" mass="81514">MSRSTVLGWCTQSCRLLQKHDHSFSFPTFNGSPPLKKRRFCDSAAPAAPRPSIHRPSEYIPHSKSGGEAPQDLGHKAREKEAEKEFYLSLLCSASTKREAKSYLSRFKAQKTTANDGCQHITPRRGDLISDLELMKDKPGVNLGSMFSETRTVAETPAPKQEWSSAQSTELFREKIHVALVKLRKPQLLDDQTLHGVAKTLVQLSRLGMSCCIVIDVGTDKDETHRRIIAREQADRLSAVIDANHGPDSRQLDSIITVPSATDMKLSVLSRGPLLSPLQQGHVVVVVPVGYANDTQRAVLLPANEVVFALSKELAGLELRSGPDEDATTTANKVNDMQKQVSLDRIIILDPAGGIPSLQRRPHVFINLEQEFEDIARELSLGSQTGFLSINDSGTASHKMPVSSLGKSNPISIFVEEELVSLPKTLGESQEMPRNGKRFAEHLENLNLLQRTLSYLPPSSSGIIVTPHEVALSAKGPLNTSAVSAVRTRRQRNPLIHNLLTDKPFQSASLPLGRLGVKSDCMSAGQSPATHSTFVKRGMPLTMLPDPRVEVWAAKKRGEPALTLDDPRIDLPRLIHLIEDSFGRKLDARHYVDRINPRLAGLIIAGEYEGGAVLTWETPPGLSDDGSEEFRARMVPYLDKFAVLKRSQGAGGVADIVFNAMVRTCFPQGVCWRSRANNPVNKWYFERSRGTWKLPGTNWTMFWTTAGVPENQSRFWDYEGVCRAIEPSWADKTQQAD</sequence>
<evidence type="ECO:0000250" key="1"/>
<evidence type="ECO:0000255" key="2"/>
<evidence type="ECO:0000255" key="3">
    <source>
        <dbReference type="PROSITE-ProRule" id="PRU00532"/>
    </source>
</evidence>
<evidence type="ECO:0000256" key="4">
    <source>
        <dbReference type="SAM" id="MobiDB-lite"/>
    </source>
</evidence>
<evidence type="ECO:0000305" key="5"/>
<protein>
    <recommendedName>
        <fullName>Amino-acid acetyltransferase, mitochondrial</fullName>
        <ecNumber>2.3.1.1</ecNumber>
    </recommendedName>
    <alternativeName>
        <fullName>Arginine-requiring protein 2</fullName>
    </alternativeName>
    <alternativeName>
        <fullName>Glutamate N-acetyltransferase</fullName>
    </alternativeName>
    <alternativeName>
        <fullName>N-acetylglutamate synthase</fullName>
        <shortName>AGS</shortName>
        <shortName>NAGS</shortName>
    </alternativeName>
</protein>
<feature type="transit peptide" description="Mitochondrion" evidence="2">
    <location>
        <begin position="1"/>
        <end position="47"/>
    </location>
</feature>
<feature type="chain" id="PRO_0000372559" description="Amino-acid acetyltransferase, mitochondrial">
    <location>
        <begin position="48"/>
        <end position="737"/>
    </location>
</feature>
<feature type="domain" description="N-acetyltransferase" evidence="3">
    <location>
        <begin position="558"/>
        <end position="727"/>
    </location>
</feature>
<feature type="region of interest" description="Disordered" evidence="4">
    <location>
        <begin position="43"/>
        <end position="78"/>
    </location>
</feature>
<comment type="function">
    <text evidence="1">N-acetylglutamate synthase involved in arginine biosynthesis.</text>
</comment>
<comment type="catalytic activity">
    <reaction>
        <text>L-glutamate + acetyl-CoA = N-acetyl-L-glutamate + CoA + H(+)</text>
        <dbReference type="Rhea" id="RHEA:24292"/>
        <dbReference type="ChEBI" id="CHEBI:15378"/>
        <dbReference type="ChEBI" id="CHEBI:29985"/>
        <dbReference type="ChEBI" id="CHEBI:44337"/>
        <dbReference type="ChEBI" id="CHEBI:57287"/>
        <dbReference type="ChEBI" id="CHEBI:57288"/>
        <dbReference type="EC" id="2.3.1.1"/>
    </reaction>
</comment>
<comment type="pathway">
    <text>Amino-acid biosynthesis; L-arginine biosynthesis; N(2)-acetyl-L-ornithine from L-glutamate: step 1/4.</text>
</comment>
<comment type="subcellular location">
    <subcellularLocation>
        <location evidence="1">Mitochondrion</location>
    </subcellularLocation>
</comment>
<comment type="similarity">
    <text evidence="5">Belongs to the acetyltransferase family.</text>
</comment>
<proteinExistence type="inferred from homology"/>
<reference key="1">
    <citation type="journal article" date="2009" name="Genome Res.">
        <title>Comparative genomic analyses of the human fungal pathogens Coccidioides and their relatives.</title>
        <authorList>
            <person name="Sharpton T.J."/>
            <person name="Stajich J.E."/>
            <person name="Rounsley S.D."/>
            <person name="Gardner M.J."/>
            <person name="Wortman J.R."/>
            <person name="Jordar V.S."/>
            <person name="Maiti R."/>
            <person name="Kodira C.D."/>
            <person name="Neafsey D.E."/>
            <person name="Zeng Q."/>
            <person name="Hung C.-Y."/>
            <person name="McMahan C."/>
            <person name="Muszewska A."/>
            <person name="Grynberg M."/>
            <person name="Mandel M.A."/>
            <person name="Kellner E.M."/>
            <person name="Barker B.M."/>
            <person name="Galgiani J.N."/>
            <person name="Orbach M.J."/>
            <person name="Kirkland T.N."/>
            <person name="Cole G.T."/>
            <person name="Henn M.R."/>
            <person name="Birren B.W."/>
            <person name="Taylor J.W."/>
        </authorList>
    </citation>
    <scope>NUCLEOTIDE SEQUENCE [LARGE SCALE GENOMIC DNA]</scope>
    <source>
        <strain>RS</strain>
    </source>
</reference>
<reference key="2">
    <citation type="journal article" date="2010" name="Genome Res.">
        <title>Population genomic sequencing of Coccidioides fungi reveals recent hybridization and transposon control.</title>
        <authorList>
            <person name="Neafsey D.E."/>
            <person name="Barker B.M."/>
            <person name="Sharpton T.J."/>
            <person name="Stajich J.E."/>
            <person name="Park D.J."/>
            <person name="Whiston E."/>
            <person name="Hung C.-Y."/>
            <person name="McMahan C."/>
            <person name="White J."/>
            <person name="Sykes S."/>
            <person name="Heiman D."/>
            <person name="Young S."/>
            <person name="Zeng Q."/>
            <person name="Abouelleil A."/>
            <person name="Aftuck L."/>
            <person name="Bessette D."/>
            <person name="Brown A."/>
            <person name="FitzGerald M."/>
            <person name="Lui A."/>
            <person name="Macdonald J.P."/>
            <person name="Priest M."/>
            <person name="Orbach M.J."/>
            <person name="Galgiani J.N."/>
            <person name="Kirkland T.N."/>
            <person name="Cole G.T."/>
            <person name="Birren B.W."/>
            <person name="Henn M.R."/>
            <person name="Taylor J.W."/>
            <person name="Rounsley S.D."/>
        </authorList>
    </citation>
    <scope>GENOME REANNOTATION</scope>
    <source>
        <strain>RS</strain>
    </source>
</reference>